<organism>
    <name type="scientific">Secale cereale</name>
    <name type="common">Rye</name>
    <dbReference type="NCBI Taxonomy" id="4550"/>
    <lineage>
        <taxon>Eukaryota</taxon>
        <taxon>Viridiplantae</taxon>
        <taxon>Streptophyta</taxon>
        <taxon>Embryophyta</taxon>
        <taxon>Tracheophyta</taxon>
        <taxon>Spermatophyta</taxon>
        <taxon>Magnoliopsida</taxon>
        <taxon>Liliopsida</taxon>
        <taxon>Poales</taxon>
        <taxon>Poaceae</taxon>
        <taxon>BOP clade</taxon>
        <taxon>Pooideae</taxon>
        <taxon>Triticodae</taxon>
        <taxon>Triticeae</taxon>
        <taxon>Hordeinae</taxon>
        <taxon>Secale</taxon>
    </lineage>
</organism>
<keyword id="KW-0067">ATP-binding</keyword>
<keyword id="KW-0143">Chaperone</keyword>
<keyword id="KW-0150">Chloroplast</keyword>
<keyword id="KW-0547">Nucleotide-binding</keyword>
<keyword id="KW-0934">Plastid</keyword>
<name>RUBB_SECCE</name>
<evidence type="ECO:0000305" key="1"/>
<proteinExistence type="evidence at transcript level"/>
<dbReference type="EMBL" id="Z68903">
    <property type="protein sequence ID" value="CAA93139.1"/>
    <property type="molecule type" value="mRNA"/>
</dbReference>
<dbReference type="SMR" id="Q43831"/>
<dbReference type="GO" id="GO:0009507">
    <property type="term" value="C:chloroplast"/>
    <property type="evidence" value="ECO:0007669"/>
    <property type="project" value="UniProtKB-SubCell"/>
</dbReference>
<dbReference type="GO" id="GO:0005524">
    <property type="term" value="F:ATP binding"/>
    <property type="evidence" value="ECO:0007669"/>
    <property type="project" value="UniProtKB-KW"/>
</dbReference>
<dbReference type="GO" id="GO:0140662">
    <property type="term" value="F:ATP-dependent protein folding chaperone"/>
    <property type="evidence" value="ECO:0007669"/>
    <property type="project" value="InterPro"/>
</dbReference>
<dbReference type="GO" id="GO:0042026">
    <property type="term" value="P:protein refolding"/>
    <property type="evidence" value="ECO:0007669"/>
    <property type="project" value="InterPro"/>
</dbReference>
<dbReference type="CDD" id="cd03344">
    <property type="entry name" value="GroEL"/>
    <property type="match status" value="1"/>
</dbReference>
<dbReference type="FunFam" id="3.50.7.10:FF:000001">
    <property type="entry name" value="60 kDa chaperonin"/>
    <property type="match status" value="1"/>
</dbReference>
<dbReference type="Gene3D" id="3.50.7.10">
    <property type="entry name" value="GroEL"/>
    <property type="match status" value="1"/>
</dbReference>
<dbReference type="Gene3D" id="1.10.560.10">
    <property type="entry name" value="GroEL-like equatorial domain"/>
    <property type="match status" value="1"/>
</dbReference>
<dbReference type="Gene3D" id="3.30.260.10">
    <property type="entry name" value="TCP-1-like chaperonin intermediate domain"/>
    <property type="match status" value="1"/>
</dbReference>
<dbReference type="InterPro" id="IPR018370">
    <property type="entry name" value="Chaperonin_Cpn60_CS"/>
</dbReference>
<dbReference type="InterPro" id="IPR001844">
    <property type="entry name" value="Cpn60/GroEL"/>
</dbReference>
<dbReference type="InterPro" id="IPR002423">
    <property type="entry name" value="Cpn60/GroEL/TCP-1"/>
</dbReference>
<dbReference type="InterPro" id="IPR027409">
    <property type="entry name" value="GroEL-like_apical_dom_sf"/>
</dbReference>
<dbReference type="InterPro" id="IPR027413">
    <property type="entry name" value="GROEL-like_equatorial_sf"/>
</dbReference>
<dbReference type="InterPro" id="IPR027410">
    <property type="entry name" value="TCP-1-like_intermed_sf"/>
</dbReference>
<dbReference type="NCBIfam" id="TIGR02348">
    <property type="entry name" value="GroEL"/>
    <property type="match status" value="1"/>
</dbReference>
<dbReference type="NCBIfam" id="NF000592">
    <property type="entry name" value="PRK00013.1"/>
    <property type="match status" value="1"/>
</dbReference>
<dbReference type="NCBIfam" id="NF009487">
    <property type="entry name" value="PRK12849.1"/>
    <property type="match status" value="1"/>
</dbReference>
<dbReference type="NCBIfam" id="NF009488">
    <property type="entry name" value="PRK12850.1"/>
    <property type="match status" value="1"/>
</dbReference>
<dbReference type="NCBIfam" id="NF009489">
    <property type="entry name" value="PRK12851.1"/>
    <property type="match status" value="1"/>
</dbReference>
<dbReference type="PANTHER" id="PTHR45633">
    <property type="entry name" value="60 KDA HEAT SHOCK PROTEIN, MITOCHONDRIAL"/>
    <property type="match status" value="1"/>
</dbReference>
<dbReference type="Pfam" id="PF00118">
    <property type="entry name" value="Cpn60_TCP1"/>
    <property type="match status" value="1"/>
</dbReference>
<dbReference type="PRINTS" id="PR00298">
    <property type="entry name" value="CHAPERONIN60"/>
</dbReference>
<dbReference type="SUPFAM" id="SSF52029">
    <property type="entry name" value="GroEL apical domain-like"/>
    <property type="match status" value="1"/>
</dbReference>
<dbReference type="SUPFAM" id="SSF48592">
    <property type="entry name" value="GroEL equatorial domain-like"/>
    <property type="match status" value="1"/>
</dbReference>
<dbReference type="SUPFAM" id="SSF54849">
    <property type="entry name" value="GroEL-intermediate domain like"/>
    <property type="match status" value="1"/>
</dbReference>
<dbReference type="PROSITE" id="PS00296">
    <property type="entry name" value="CHAPERONINS_CPN60"/>
    <property type="match status" value="1"/>
</dbReference>
<protein>
    <recommendedName>
        <fullName>RuBisCO large subunit-binding protein subunit beta, chloroplastic</fullName>
    </recommendedName>
    <alternativeName>
        <fullName>60 kDa chaperonin subunit beta</fullName>
    </alternativeName>
    <alternativeName>
        <fullName>CPN-60 beta</fullName>
    </alternativeName>
</protein>
<accession>Q43831</accession>
<feature type="chain" id="PRO_0000063634" description="RuBisCO large subunit-binding protein subunit beta, chloroplastic">
    <location>
        <begin position="1" status="less than"/>
        <end position="499"/>
    </location>
</feature>
<feature type="non-terminal residue">
    <location>
        <position position="1"/>
    </location>
</feature>
<comment type="function">
    <text>This protein binds RuBisCO small and large subunits and is implicated in the assembly of the enzyme oligomer.</text>
</comment>
<comment type="subunit">
    <text>Oligomer of probably six alpha and six beta subunits.</text>
</comment>
<comment type="subcellular location">
    <subcellularLocation>
        <location>Plastid</location>
        <location>Chloroplast</location>
    </subcellularLocation>
</comment>
<comment type="miscellaneous">
    <text>This protein shows ATPase activity.</text>
</comment>
<comment type="similarity">
    <text evidence="1">Belongs to the chaperonin (HSP60) family.</text>
</comment>
<reference key="1">
    <citation type="journal article" date="1996" name="Planta">
        <title>Comparison of the expression of a plastidic chaperonin 60 in different plant tissues and under photosynthetic and non-photosynthetic conditions.</title>
        <authorList>
            <person name="Schmitz G."/>
            <person name="Schmidt M."/>
            <person name="Feierabend J."/>
        </authorList>
    </citation>
    <scope>NUCLEOTIDE SEQUENCE [MRNA]</scope>
    <source>
        <strain>cv. Petkus 'Halo'</strain>
        <tissue>Leaf</tissue>
    </source>
</reference>
<gene>
    <name type="primary">CPN60</name>
</gene>
<sequence>PQIVNDGVTVAREVELEDPVENIGAKLVRQAAAKTNDLAGDGTTTSVVLAQGLIAEGVKVIAAGANPVQITRGIEKTAKALVLELKKMSKEVEDSELADVAAVSAGNNYEIGNMIAEAMSKVGRKGVVTLEEGRSSENNLYVVEGMQFERGYISPYFVTDSEKMTTEYENCKLLLVDKKITNARDLINVLEEAIRGQYPILIIAEDIEQEALATLVVNKLRGSLKICAIKAPGFGERKTQYLDDIAILTGGTVIRDEVGLTLDKADNTVLGTAAKVVLTKESTTIVGDGSTQEEVTKRVAQIKNLIEAAEQDYEKEKLNERIAKLAGGVAVIQVGAQTETELKEKKLRVEDALNATKAAVEEGIVVGGGCTLLRLAAKVDAIKDTLENDEQKVGAEIVRRALCYPLKLIAKNAGVNGSVVTEKVLSNDNFKFGYNAATGQYEDLMAAGIIDPTKVVRCCLEHAASVAKTFLTSDVVVVEIKEPEAAPLANPMDNSGFGY</sequence>